<proteinExistence type="inferred from homology"/>
<dbReference type="EC" id="6.3.2.9" evidence="1"/>
<dbReference type="EMBL" id="AB052554">
    <property type="protein sequence ID" value="BAB19200.1"/>
    <property type="molecule type" value="Genomic_DNA"/>
</dbReference>
<dbReference type="EMBL" id="AP011177">
    <property type="protein sequence ID" value="BAJ04006.1"/>
    <property type="status" value="ALT_INIT"/>
    <property type="molecule type" value="Genomic_DNA"/>
</dbReference>
<dbReference type="RefSeq" id="WP_041420110.1">
    <property type="nucleotide sequence ID" value="NC_014012.1"/>
</dbReference>
<dbReference type="SMR" id="Q9F1N2"/>
<dbReference type="STRING" id="637905.SVI_4035"/>
<dbReference type="KEGG" id="svo:SVI_4035"/>
<dbReference type="eggNOG" id="COG0771">
    <property type="taxonomic scope" value="Bacteria"/>
</dbReference>
<dbReference type="HOGENOM" id="CLU_032540_1_0_6"/>
<dbReference type="OrthoDB" id="9809796at2"/>
<dbReference type="UniPathway" id="UPA00219"/>
<dbReference type="Proteomes" id="UP000002350">
    <property type="component" value="Chromosome"/>
</dbReference>
<dbReference type="GO" id="GO:0005737">
    <property type="term" value="C:cytoplasm"/>
    <property type="evidence" value="ECO:0007669"/>
    <property type="project" value="UniProtKB-SubCell"/>
</dbReference>
<dbReference type="GO" id="GO:0005524">
    <property type="term" value="F:ATP binding"/>
    <property type="evidence" value="ECO:0007669"/>
    <property type="project" value="UniProtKB-UniRule"/>
</dbReference>
<dbReference type="GO" id="GO:0008764">
    <property type="term" value="F:UDP-N-acetylmuramoylalanine-D-glutamate ligase activity"/>
    <property type="evidence" value="ECO:0007669"/>
    <property type="project" value="UniProtKB-UniRule"/>
</dbReference>
<dbReference type="GO" id="GO:0051301">
    <property type="term" value="P:cell division"/>
    <property type="evidence" value="ECO:0007669"/>
    <property type="project" value="UniProtKB-KW"/>
</dbReference>
<dbReference type="GO" id="GO:0071555">
    <property type="term" value="P:cell wall organization"/>
    <property type="evidence" value="ECO:0007669"/>
    <property type="project" value="UniProtKB-KW"/>
</dbReference>
<dbReference type="GO" id="GO:0009252">
    <property type="term" value="P:peptidoglycan biosynthetic process"/>
    <property type="evidence" value="ECO:0007669"/>
    <property type="project" value="UniProtKB-UniRule"/>
</dbReference>
<dbReference type="GO" id="GO:0008360">
    <property type="term" value="P:regulation of cell shape"/>
    <property type="evidence" value="ECO:0007669"/>
    <property type="project" value="UniProtKB-KW"/>
</dbReference>
<dbReference type="Gene3D" id="3.90.190.20">
    <property type="entry name" value="Mur ligase, C-terminal domain"/>
    <property type="match status" value="1"/>
</dbReference>
<dbReference type="Gene3D" id="3.40.1190.10">
    <property type="entry name" value="Mur-like, catalytic domain"/>
    <property type="match status" value="1"/>
</dbReference>
<dbReference type="Gene3D" id="3.40.50.720">
    <property type="entry name" value="NAD(P)-binding Rossmann-like Domain"/>
    <property type="match status" value="1"/>
</dbReference>
<dbReference type="HAMAP" id="MF_00639">
    <property type="entry name" value="MurD"/>
    <property type="match status" value="1"/>
</dbReference>
<dbReference type="InterPro" id="IPR036565">
    <property type="entry name" value="Mur-like_cat_sf"/>
</dbReference>
<dbReference type="InterPro" id="IPR004101">
    <property type="entry name" value="Mur_ligase_C"/>
</dbReference>
<dbReference type="InterPro" id="IPR036615">
    <property type="entry name" value="Mur_ligase_C_dom_sf"/>
</dbReference>
<dbReference type="InterPro" id="IPR013221">
    <property type="entry name" value="Mur_ligase_cen"/>
</dbReference>
<dbReference type="InterPro" id="IPR005762">
    <property type="entry name" value="MurD"/>
</dbReference>
<dbReference type="NCBIfam" id="TIGR01087">
    <property type="entry name" value="murD"/>
    <property type="match status" value="1"/>
</dbReference>
<dbReference type="PANTHER" id="PTHR43692">
    <property type="entry name" value="UDP-N-ACETYLMURAMOYLALANINE--D-GLUTAMATE LIGASE"/>
    <property type="match status" value="1"/>
</dbReference>
<dbReference type="PANTHER" id="PTHR43692:SF1">
    <property type="entry name" value="UDP-N-ACETYLMURAMOYLALANINE--D-GLUTAMATE LIGASE"/>
    <property type="match status" value="1"/>
</dbReference>
<dbReference type="Pfam" id="PF02875">
    <property type="entry name" value="Mur_ligase_C"/>
    <property type="match status" value="1"/>
</dbReference>
<dbReference type="Pfam" id="PF08245">
    <property type="entry name" value="Mur_ligase_M"/>
    <property type="match status" value="1"/>
</dbReference>
<dbReference type="Pfam" id="PF21799">
    <property type="entry name" value="MurD-like_N"/>
    <property type="match status" value="1"/>
</dbReference>
<dbReference type="SUPFAM" id="SSF51984">
    <property type="entry name" value="MurCD N-terminal domain"/>
    <property type="match status" value="1"/>
</dbReference>
<dbReference type="SUPFAM" id="SSF53623">
    <property type="entry name" value="MurD-like peptide ligases, catalytic domain"/>
    <property type="match status" value="1"/>
</dbReference>
<dbReference type="SUPFAM" id="SSF53244">
    <property type="entry name" value="MurD-like peptide ligases, peptide-binding domain"/>
    <property type="match status" value="1"/>
</dbReference>
<keyword id="KW-0067">ATP-binding</keyword>
<keyword id="KW-0131">Cell cycle</keyword>
<keyword id="KW-0132">Cell division</keyword>
<keyword id="KW-0133">Cell shape</keyword>
<keyword id="KW-0961">Cell wall biogenesis/degradation</keyword>
<keyword id="KW-0963">Cytoplasm</keyword>
<keyword id="KW-0436">Ligase</keyword>
<keyword id="KW-0547">Nucleotide-binding</keyword>
<keyword id="KW-0573">Peptidoglycan synthesis</keyword>
<keyword id="KW-1185">Reference proteome</keyword>
<name>MURD_SHEVD</name>
<accession>Q9F1N2</accession>
<accession>D4ZDU5</accession>
<organism>
    <name type="scientific">Shewanella violacea (strain JCM 10179 / CIP 106290 / LMG 19151 / DSS12)</name>
    <dbReference type="NCBI Taxonomy" id="637905"/>
    <lineage>
        <taxon>Bacteria</taxon>
        <taxon>Pseudomonadati</taxon>
        <taxon>Pseudomonadota</taxon>
        <taxon>Gammaproteobacteria</taxon>
        <taxon>Alteromonadales</taxon>
        <taxon>Shewanellaceae</taxon>
        <taxon>Shewanella</taxon>
    </lineage>
</organism>
<feature type="chain" id="PRO_0000109080" description="UDP-N-acetylmuramoylalanine--D-glutamate ligase">
    <location>
        <begin position="1"/>
        <end position="449"/>
    </location>
</feature>
<feature type="binding site" evidence="1">
    <location>
        <begin position="116"/>
        <end position="122"/>
    </location>
    <ligand>
        <name>ATP</name>
        <dbReference type="ChEBI" id="CHEBI:30616"/>
    </ligand>
</feature>
<reference key="1">
    <citation type="journal article" date="2002" name="J. Biochem.">
        <title>Isolation and characterization of the dcw cluster from the piezophilic deep-sea bacterium Shewanella violacea.</title>
        <authorList>
            <person name="Ishii A."/>
            <person name="Nakasone K."/>
            <person name="Sato T."/>
            <person name="Wachi M."/>
            <person name="Sugai M."/>
            <person name="Nagai K."/>
            <person name="Kato C."/>
        </authorList>
    </citation>
    <scope>NUCLEOTIDE SEQUENCE [GENOMIC DNA]</scope>
</reference>
<reference key="2">
    <citation type="journal article" date="2010" name="Mol. Biosyst.">
        <title>Complete genome sequence and comparative analysis of Shewanella violacea, a psychrophilic and piezophilic bacterium from deep sea floor sediments.</title>
        <authorList>
            <person name="Aono E."/>
            <person name="Baba T."/>
            <person name="Ara T."/>
            <person name="Nishi T."/>
            <person name="Nakamichi T."/>
            <person name="Inamoto E."/>
            <person name="Toyonaga H."/>
            <person name="Hasegawa M."/>
            <person name="Takai Y."/>
            <person name="Okumura Y."/>
            <person name="Baba M."/>
            <person name="Tomita M."/>
            <person name="Kato C."/>
            <person name="Oshima T."/>
            <person name="Nakasone K."/>
            <person name="Mori H."/>
        </authorList>
    </citation>
    <scope>NUCLEOTIDE SEQUENCE [LARGE SCALE GENOMIC DNA]</scope>
    <source>
        <strain>JCM 10179 / CIP 106290 / LMG 19151 / DSS12</strain>
    </source>
</reference>
<evidence type="ECO:0000255" key="1">
    <source>
        <dbReference type="HAMAP-Rule" id="MF_00639"/>
    </source>
</evidence>
<evidence type="ECO:0000305" key="2"/>
<comment type="function">
    <text evidence="1">Cell wall formation. Catalyzes the addition of glutamate to the nucleotide precursor UDP-N-acetylmuramoyl-L-alanine (UMA).</text>
</comment>
<comment type="catalytic activity">
    <reaction evidence="1">
        <text>UDP-N-acetyl-alpha-D-muramoyl-L-alanine + D-glutamate + ATP = UDP-N-acetyl-alpha-D-muramoyl-L-alanyl-D-glutamate + ADP + phosphate + H(+)</text>
        <dbReference type="Rhea" id="RHEA:16429"/>
        <dbReference type="ChEBI" id="CHEBI:15378"/>
        <dbReference type="ChEBI" id="CHEBI:29986"/>
        <dbReference type="ChEBI" id="CHEBI:30616"/>
        <dbReference type="ChEBI" id="CHEBI:43474"/>
        <dbReference type="ChEBI" id="CHEBI:83898"/>
        <dbReference type="ChEBI" id="CHEBI:83900"/>
        <dbReference type="ChEBI" id="CHEBI:456216"/>
        <dbReference type="EC" id="6.3.2.9"/>
    </reaction>
</comment>
<comment type="pathway">
    <text evidence="1">Cell wall biogenesis; peptidoglycan biosynthesis.</text>
</comment>
<comment type="subcellular location">
    <subcellularLocation>
        <location evidence="1">Cytoplasm</location>
    </subcellularLocation>
</comment>
<comment type="similarity">
    <text evidence="1">Belongs to the MurCDEF family.</text>
</comment>
<comment type="sequence caution" evidence="2">
    <conflict type="erroneous initiation">
        <sequence resource="EMBL-CDS" id="BAJ04006"/>
    </conflict>
    <text>Extended N-terminus.</text>
</comment>
<protein>
    <recommendedName>
        <fullName evidence="1">UDP-N-acetylmuramoylalanine--D-glutamate ligase</fullName>
        <ecNumber evidence="1">6.3.2.9</ecNumber>
    </recommendedName>
    <alternativeName>
        <fullName evidence="1">D-glutamic acid-adding enzyme</fullName>
    </alternativeName>
    <alternativeName>
        <fullName evidence="1">UDP-N-acetylmuramoyl-L-alanyl-D-glutamate synthetase</fullName>
    </alternativeName>
</protein>
<sequence>MELDNSHLVLGLGATGLSVVRYLCRQGITPLVMDSRDQPPGAEQLALEFPEVNLITGGFDCRYLVQASQIVISPGIAIDTPEIRAAIDMDIEVIGDVELFARAIKDRSPCVIGITGSNGKSTVTTLVGEMAKAAGLNYAVGGNIGIPVLDLLQKPVDLYILELSSFQLETTHSLNCISATCLNISEDHMDRYSDLEAYRQAKLALYDQSKRALFNREDSLTQPNDPMNQNSFGLTSPVNDEWGVKDGKIVHGTTEIASLQDVAIVGSHNHANLIAAMALAYHAGIDKEPMIQVAKNFTGLAHRCELVANIAAVAYVNDSKATNVGATVAALEGLGEHLGDIILIVGGDGKGADFTPLETVFNKVAHLITLGKDGDKIAALKEHSHKADSMADAVKQAAELATAGDIVLLSPACASLDMYKNFMARGDDFRQLAQALSVETLDSEASADV</sequence>
<gene>
    <name evidence="1" type="primary">murD</name>
    <name type="ordered locus">SVI_4035</name>
</gene>